<comment type="function">
    <text evidence="1">Catalyzes the hydrolytic deamination of adenine to hypoxanthine. Plays an important role in the purine salvage pathway and in nitrogen catabolism.</text>
</comment>
<comment type="catalytic activity">
    <reaction evidence="1">
        <text>adenine + H2O + H(+) = hypoxanthine + NH4(+)</text>
        <dbReference type="Rhea" id="RHEA:23688"/>
        <dbReference type="ChEBI" id="CHEBI:15377"/>
        <dbReference type="ChEBI" id="CHEBI:15378"/>
        <dbReference type="ChEBI" id="CHEBI:16708"/>
        <dbReference type="ChEBI" id="CHEBI:17368"/>
        <dbReference type="ChEBI" id="CHEBI:28938"/>
        <dbReference type="EC" id="3.5.4.2"/>
    </reaction>
</comment>
<comment type="cofactor">
    <cofactor evidence="1">
        <name>Zn(2+)</name>
        <dbReference type="ChEBI" id="CHEBI:29105"/>
    </cofactor>
    <text evidence="1">Binds 1 zinc ion per subunit.</text>
</comment>
<comment type="similarity">
    <text evidence="1">Belongs to the metallo-dependent hydrolases superfamily. Adenosine and AMP deaminases family. Adenine deaminase type 2 subfamily.</text>
</comment>
<dbReference type="EC" id="3.5.4.2" evidence="1"/>
<dbReference type="EMBL" id="BA000012">
    <property type="protein sequence ID" value="BAB50114.1"/>
    <property type="molecule type" value="Genomic_DNA"/>
</dbReference>
<dbReference type="RefSeq" id="WP_010911461.1">
    <property type="nucleotide sequence ID" value="NC_002678.2"/>
</dbReference>
<dbReference type="SMR" id="Q98GV2"/>
<dbReference type="KEGG" id="mlo:mll3163"/>
<dbReference type="PATRIC" id="fig|266835.9.peg.2520"/>
<dbReference type="eggNOG" id="COG1816">
    <property type="taxonomic scope" value="Bacteria"/>
</dbReference>
<dbReference type="HOGENOM" id="CLU_039228_7_1_5"/>
<dbReference type="Proteomes" id="UP000000552">
    <property type="component" value="Chromosome"/>
</dbReference>
<dbReference type="GO" id="GO:0000034">
    <property type="term" value="F:adenine deaminase activity"/>
    <property type="evidence" value="ECO:0007669"/>
    <property type="project" value="UniProtKB-UniRule"/>
</dbReference>
<dbReference type="GO" id="GO:0008270">
    <property type="term" value="F:zinc ion binding"/>
    <property type="evidence" value="ECO:0007669"/>
    <property type="project" value="UniProtKB-UniRule"/>
</dbReference>
<dbReference type="GO" id="GO:0006146">
    <property type="term" value="P:adenine catabolic process"/>
    <property type="evidence" value="ECO:0007669"/>
    <property type="project" value="UniProtKB-UniRule"/>
</dbReference>
<dbReference type="GO" id="GO:0043103">
    <property type="term" value="P:hypoxanthine salvage"/>
    <property type="evidence" value="ECO:0007669"/>
    <property type="project" value="UniProtKB-UniRule"/>
</dbReference>
<dbReference type="GO" id="GO:0009117">
    <property type="term" value="P:nucleotide metabolic process"/>
    <property type="evidence" value="ECO:0007669"/>
    <property type="project" value="UniProtKB-KW"/>
</dbReference>
<dbReference type="CDD" id="cd01320">
    <property type="entry name" value="ADA"/>
    <property type="match status" value="1"/>
</dbReference>
<dbReference type="Gene3D" id="3.20.20.140">
    <property type="entry name" value="Metal-dependent hydrolases"/>
    <property type="match status" value="1"/>
</dbReference>
<dbReference type="HAMAP" id="MF_01962">
    <property type="entry name" value="Adenine_deaminase"/>
    <property type="match status" value="1"/>
</dbReference>
<dbReference type="InterPro" id="IPR001365">
    <property type="entry name" value="A_deaminase_dom"/>
</dbReference>
<dbReference type="InterPro" id="IPR028892">
    <property type="entry name" value="ADE"/>
</dbReference>
<dbReference type="InterPro" id="IPR006330">
    <property type="entry name" value="Ado/ade_deaminase"/>
</dbReference>
<dbReference type="InterPro" id="IPR032466">
    <property type="entry name" value="Metal_Hydrolase"/>
</dbReference>
<dbReference type="NCBIfam" id="TIGR01430">
    <property type="entry name" value="aden_deam"/>
    <property type="match status" value="1"/>
</dbReference>
<dbReference type="NCBIfam" id="NF006848">
    <property type="entry name" value="PRK09358.1-3"/>
    <property type="match status" value="1"/>
</dbReference>
<dbReference type="PANTHER" id="PTHR43114">
    <property type="entry name" value="ADENINE DEAMINASE"/>
    <property type="match status" value="1"/>
</dbReference>
<dbReference type="PANTHER" id="PTHR43114:SF6">
    <property type="entry name" value="ADENINE DEAMINASE"/>
    <property type="match status" value="1"/>
</dbReference>
<dbReference type="Pfam" id="PF00962">
    <property type="entry name" value="A_deaminase"/>
    <property type="match status" value="1"/>
</dbReference>
<dbReference type="SUPFAM" id="SSF51556">
    <property type="entry name" value="Metallo-dependent hydrolases"/>
    <property type="match status" value="1"/>
</dbReference>
<feature type="chain" id="PRO_0000194381" description="Adenine deaminase">
    <location>
        <begin position="1"/>
        <end position="324"/>
    </location>
</feature>
<feature type="active site" description="Proton donor" evidence="1">
    <location>
        <position position="189"/>
    </location>
</feature>
<feature type="binding site" evidence="1">
    <location>
        <position position="8"/>
    </location>
    <ligand>
        <name>Zn(2+)</name>
        <dbReference type="ChEBI" id="CHEBI:29105"/>
        <note>catalytic</note>
    </ligand>
</feature>
<feature type="binding site" evidence="1">
    <location>
        <position position="10"/>
    </location>
    <ligand>
        <name>Zn(2+)</name>
        <dbReference type="ChEBI" id="CHEBI:29105"/>
        <note>catalytic</note>
    </ligand>
</feature>
<feature type="binding site" evidence="1">
    <location>
        <position position="186"/>
    </location>
    <ligand>
        <name>Zn(2+)</name>
        <dbReference type="ChEBI" id="CHEBI:29105"/>
        <note>catalytic</note>
    </ligand>
</feature>
<feature type="binding site" evidence="1">
    <location>
        <position position="267"/>
    </location>
    <ligand>
        <name>Zn(2+)</name>
        <dbReference type="ChEBI" id="CHEBI:29105"/>
        <note>catalytic</note>
    </ligand>
</feature>
<feature type="binding site" evidence="1">
    <location>
        <position position="268"/>
    </location>
    <ligand>
        <name>substrate</name>
    </ligand>
</feature>
<feature type="site" description="Important for catalytic activity" evidence="1">
    <location>
        <position position="210"/>
    </location>
</feature>
<accession>Q98GV2</accession>
<gene>
    <name type="ordered locus">mll3163</name>
</gene>
<sequence length="324" mass="35247">MPLKAELHCHIEGAAAPELVIRQAQKYGKDTAPYIQNGSFVWHDFTSFLAAYDFSAELFRTEEDYARLADHYLTSLARDGAIYSEVFTSPDHATKAGLSPKAYTDALGEGMLRAKAKTGIEGRMIVTGVRHVGVESIERAARFAARCGNPLVTGFGVAGDERVGEMEDYVRAFEIAREAGLGITIHAGELTGWETVQAALDHIRPSRIGHGVRAIENPDLVRRIADEGIVLECCPGSNIALKVFDSFADHPLPALQAAGCKVTLNSDDPPYFWTSLKREYDIAAEHFAMNEKALAAVTRTAIEAAFVDRKTKAALLARLNGAAR</sequence>
<protein>
    <recommendedName>
        <fullName evidence="1">Adenine deaminase</fullName>
        <shortName evidence="1">ADE</shortName>
        <ecNumber evidence="1">3.5.4.2</ecNumber>
    </recommendedName>
    <alternativeName>
        <fullName evidence="1">Adenine aminohydrolase</fullName>
        <shortName evidence="1">AAH</shortName>
    </alternativeName>
</protein>
<reference key="1">
    <citation type="journal article" date="2000" name="DNA Res.">
        <title>Complete genome structure of the nitrogen-fixing symbiotic bacterium Mesorhizobium loti.</title>
        <authorList>
            <person name="Kaneko T."/>
            <person name="Nakamura Y."/>
            <person name="Sato S."/>
            <person name="Asamizu E."/>
            <person name="Kato T."/>
            <person name="Sasamoto S."/>
            <person name="Watanabe A."/>
            <person name="Idesawa K."/>
            <person name="Ishikawa A."/>
            <person name="Kawashima K."/>
            <person name="Kimura T."/>
            <person name="Kishida Y."/>
            <person name="Kiyokawa C."/>
            <person name="Kohara M."/>
            <person name="Matsumoto M."/>
            <person name="Matsuno A."/>
            <person name="Mochizuki Y."/>
            <person name="Nakayama S."/>
            <person name="Nakazaki N."/>
            <person name="Shimpo S."/>
            <person name="Sugimoto M."/>
            <person name="Takeuchi C."/>
            <person name="Yamada M."/>
            <person name="Tabata S."/>
        </authorList>
    </citation>
    <scope>NUCLEOTIDE SEQUENCE [LARGE SCALE GENOMIC DNA]</scope>
    <source>
        <strain>LMG 29417 / CECT 9101 / MAFF 303099</strain>
    </source>
</reference>
<keyword id="KW-0378">Hydrolase</keyword>
<keyword id="KW-0479">Metal-binding</keyword>
<keyword id="KW-0546">Nucleotide metabolism</keyword>
<keyword id="KW-0862">Zinc</keyword>
<name>ADE_RHILO</name>
<proteinExistence type="inferred from homology"/>
<evidence type="ECO:0000255" key="1">
    <source>
        <dbReference type="HAMAP-Rule" id="MF_01962"/>
    </source>
</evidence>
<organism>
    <name type="scientific">Mesorhizobium japonicum (strain LMG 29417 / CECT 9101 / MAFF 303099)</name>
    <name type="common">Mesorhizobium loti (strain MAFF 303099)</name>
    <dbReference type="NCBI Taxonomy" id="266835"/>
    <lineage>
        <taxon>Bacteria</taxon>
        <taxon>Pseudomonadati</taxon>
        <taxon>Pseudomonadota</taxon>
        <taxon>Alphaproteobacteria</taxon>
        <taxon>Hyphomicrobiales</taxon>
        <taxon>Phyllobacteriaceae</taxon>
        <taxon>Mesorhizobium</taxon>
    </lineage>
</organism>